<keyword id="KW-0963">Cytoplasm</keyword>
<keyword id="KW-0413">Isomerase</keyword>
<keyword id="KW-0464">Manganese</keyword>
<keyword id="KW-0479">Metal-binding</keyword>
<keyword id="KW-1185">Reference proteome</keyword>
<comment type="function">
    <text evidence="1">Isomerase that catalyzes the conversion of deoxy-ribose 1-phosphate (dRib-1-P) and ribose 1-phosphate (Rib-1-P) to deoxy-ribose 5-phosphate (dRib-5-P) and ribose 5-phosphate (Rib-5-P), respectively.</text>
</comment>
<comment type="catalytic activity">
    <reaction evidence="1">
        <text>2-deoxy-alpha-D-ribose 1-phosphate = 2-deoxy-D-ribose 5-phosphate</text>
        <dbReference type="Rhea" id="RHEA:27658"/>
        <dbReference type="ChEBI" id="CHEBI:57259"/>
        <dbReference type="ChEBI" id="CHEBI:62877"/>
        <dbReference type="EC" id="5.4.2.7"/>
    </reaction>
</comment>
<comment type="catalytic activity">
    <reaction evidence="1">
        <text>alpha-D-ribose 1-phosphate = D-ribose 5-phosphate</text>
        <dbReference type="Rhea" id="RHEA:18793"/>
        <dbReference type="ChEBI" id="CHEBI:57720"/>
        <dbReference type="ChEBI" id="CHEBI:78346"/>
        <dbReference type="EC" id="5.4.2.7"/>
    </reaction>
</comment>
<comment type="cofactor">
    <cofactor evidence="1">
        <name>Mn(2+)</name>
        <dbReference type="ChEBI" id="CHEBI:29035"/>
    </cofactor>
    <text evidence="1">Binds 2 manganese ions.</text>
</comment>
<comment type="pathway">
    <text evidence="1">Carbohydrate degradation; 2-deoxy-D-ribose 1-phosphate degradation; D-glyceraldehyde 3-phosphate and acetaldehyde from 2-deoxy-alpha-D-ribose 1-phosphate: step 1/2.</text>
</comment>
<comment type="subcellular location">
    <subcellularLocation>
        <location evidence="1">Cytoplasm</location>
    </subcellularLocation>
</comment>
<comment type="similarity">
    <text evidence="1">Belongs to the phosphopentomutase family.</text>
</comment>
<name>DEOB_SHELP</name>
<organism>
    <name type="scientific">Shewanella loihica (strain ATCC BAA-1088 / PV-4)</name>
    <dbReference type="NCBI Taxonomy" id="323850"/>
    <lineage>
        <taxon>Bacteria</taxon>
        <taxon>Pseudomonadati</taxon>
        <taxon>Pseudomonadota</taxon>
        <taxon>Gammaproteobacteria</taxon>
        <taxon>Alteromonadales</taxon>
        <taxon>Shewanellaceae</taxon>
        <taxon>Shewanella</taxon>
    </lineage>
</organism>
<sequence length="405" mass="43635">MKRTVIMMLDSFGVGAAKDAEAFGDTGSNTFGHIAKACAEGKANDGREGPLKLPNLAKLGLALAAKESTGSFAEGFGDDVEVIGAYGHADELSSGKDTPSGHWEMAGVPVLYEWGYFSDLKDSFPKELTDKILERAGLSGFLGNCHASGTAILEELGEEHMTSGLPIFYTSADSVFQIACHEETFGLENLYTLCQIAREELEPYNIGRVIARPFVGTGPSDFARTGNRKDYAVEPPSKTVLDKLKEAGGEVVSVGKIADIYAHCGITKKVKATGLEALFDATLEQVKQAGDRTIVFTNFVDFDSHYGHRRDIAGYARALEYFDSRLPEMLALLGEEDLLLLTADHGCDPTWQGTDHTRERVPVLAYGAGLAPGSLGRRNSFADIGQSIASYFGLEPMEYGESFVA</sequence>
<protein>
    <recommendedName>
        <fullName evidence="1">Phosphopentomutase</fullName>
        <ecNumber evidence="1">5.4.2.7</ecNumber>
    </recommendedName>
    <alternativeName>
        <fullName evidence="1">Phosphodeoxyribomutase</fullName>
    </alternativeName>
</protein>
<dbReference type="EC" id="5.4.2.7" evidence="1"/>
<dbReference type="EMBL" id="CP000606">
    <property type="protein sequence ID" value="ABO24679.1"/>
    <property type="molecule type" value="Genomic_DNA"/>
</dbReference>
<dbReference type="RefSeq" id="WP_011866610.1">
    <property type="nucleotide sequence ID" value="NC_009092.1"/>
</dbReference>
<dbReference type="SMR" id="A3QGT1"/>
<dbReference type="STRING" id="323850.Shew_2813"/>
<dbReference type="KEGG" id="slo:Shew_2813"/>
<dbReference type="eggNOG" id="COG1015">
    <property type="taxonomic scope" value="Bacteria"/>
</dbReference>
<dbReference type="HOGENOM" id="CLU_053861_0_0_6"/>
<dbReference type="OrthoDB" id="9769930at2"/>
<dbReference type="UniPathway" id="UPA00002">
    <property type="reaction ID" value="UER00467"/>
</dbReference>
<dbReference type="Proteomes" id="UP000001558">
    <property type="component" value="Chromosome"/>
</dbReference>
<dbReference type="GO" id="GO:0005829">
    <property type="term" value="C:cytosol"/>
    <property type="evidence" value="ECO:0007669"/>
    <property type="project" value="TreeGrafter"/>
</dbReference>
<dbReference type="GO" id="GO:0000287">
    <property type="term" value="F:magnesium ion binding"/>
    <property type="evidence" value="ECO:0007669"/>
    <property type="project" value="InterPro"/>
</dbReference>
<dbReference type="GO" id="GO:0030145">
    <property type="term" value="F:manganese ion binding"/>
    <property type="evidence" value="ECO:0007669"/>
    <property type="project" value="UniProtKB-UniRule"/>
</dbReference>
<dbReference type="GO" id="GO:0008973">
    <property type="term" value="F:phosphopentomutase activity"/>
    <property type="evidence" value="ECO:0007669"/>
    <property type="project" value="UniProtKB-UniRule"/>
</dbReference>
<dbReference type="GO" id="GO:0006018">
    <property type="term" value="P:2-deoxyribose 1-phosphate catabolic process"/>
    <property type="evidence" value="ECO:0007669"/>
    <property type="project" value="UniProtKB-UniRule"/>
</dbReference>
<dbReference type="GO" id="GO:0006015">
    <property type="term" value="P:5-phosphoribose 1-diphosphate biosynthetic process"/>
    <property type="evidence" value="ECO:0007669"/>
    <property type="project" value="UniProtKB-UniPathway"/>
</dbReference>
<dbReference type="GO" id="GO:0043094">
    <property type="term" value="P:metabolic compound salvage"/>
    <property type="evidence" value="ECO:0007669"/>
    <property type="project" value="InterPro"/>
</dbReference>
<dbReference type="GO" id="GO:0009117">
    <property type="term" value="P:nucleotide metabolic process"/>
    <property type="evidence" value="ECO:0007669"/>
    <property type="project" value="InterPro"/>
</dbReference>
<dbReference type="CDD" id="cd16009">
    <property type="entry name" value="PPM"/>
    <property type="match status" value="1"/>
</dbReference>
<dbReference type="FunFam" id="3.30.70.1250:FF:000001">
    <property type="entry name" value="Phosphopentomutase"/>
    <property type="match status" value="1"/>
</dbReference>
<dbReference type="Gene3D" id="3.40.720.10">
    <property type="entry name" value="Alkaline Phosphatase, subunit A"/>
    <property type="match status" value="1"/>
</dbReference>
<dbReference type="Gene3D" id="3.30.70.1250">
    <property type="entry name" value="Phosphopentomutase"/>
    <property type="match status" value="1"/>
</dbReference>
<dbReference type="HAMAP" id="MF_00740">
    <property type="entry name" value="Phosphopentomut"/>
    <property type="match status" value="1"/>
</dbReference>
<dbReference type="InterPro" id="IPR017850">
    <property type="entry name" value="Alkaline_phosphatase_core_sf"/>
</dbReference>
<dbReference type="InterPro" id="IPR010045">
    <property type="entry name" value="DeoB"/>
</dbReference>
<dbReference type="InterPro" id="IPR006124">
    <property type="entry name" value="Metalloenzyme"/>
</dbReference>
<dbReference type="InterPro" id="IPR024052">
    <property type="entry name" value="Phosphopentomutase_DeoB_cap_sf"/>
</dbReference>
<dbReference type="NCBIfam" id="TIGR01696">
    <property type="entry name" value="deoB"/>
    <property type="match status" value="1"/>
</dbReference>
<dbReference type="NCBIfam" id="NF003766">
    <property type="entry name" value="PRK05362.1"/>
    <property type="match status" value="1"/>
</dbReference>
<dbReference type="PANTHER" id="PTHR21110">
    <property type="entry name" value="PHOSPHOPENTOMUTASE"/>
    <property type="match status" value="1"/>
</dbReference>
<dbReference type="PANTHER" id="PTHR21110:SF0">
    <property type="entry name" value="PHOSPHOPENTOMUTASE"/>
    <property type="match status" value="1"/>
</dbReference>
<dbReference type="Pfam" id="PF01676">
    <property type="entry name" value="Metalloenzyme"/>
    <property type="match status" value="1"/>
</dbReference>
<dbReference type="PIRSF" id="PIRSF001491">
    <property type="entry name" value="Ppentomutase"/>
    <property type="match status" value="1"/>
</dbReference>
<dbReference type="SUPFAM" id="SSF53649">
    <property type="entry name" value="Alkaline phosphatase-like"/>
    <property type="match status" value="1"/>
</dbReference>
<dbReference type="SUPFAM" id="SSF143856">
    <property type="entry name" value="DeoB insert domain-like"/>
    <property type="match status" value="1"/>
</dbReference>
<feature type="chain" id="PRO_1000046398" description="Phosphopentomutase">
    <location>
        <begin position="1"/>
        <end position="405"/>
    </location>
</feature>
<feature type="binding site" evidence="1">
    <location>
        <position position="10"/>
    </location>
    <ligand>
        <name>Mn(2+)</name>
        <dbReference type="ChEBI" id="CHEBI:29035"/>
        <label>1</label>
    </ligand>
</feature>
<feature type="binding site" evidence="1">
    <location>
        <position position="303"/>
    </location>
    <ligand>
        <name>Mn(2+)</name>
        <dbReference type="ChEBI" id="CHEBI:29035"/>
        <label>2</label>
    </ligand>
</feature>
<feature type="binding site" evidence="1">
    <location>
        <position position="308"/>
    </location>
    <ligand>
        <name>Mn(2+)</name>
        <dbReference type="ChEBI" id="CHEBI:29035"/>
        <label>2</label>
    </ligand>
</feature>
<feature type="binding site" evidence="1">
    <location>
        <position position="344"/>
    </location>
    <ligand>
        <name>Mn(2+)</name>
        <dbReference type="ChEBI" id="CHEBI:29035"/>
        <label>1</label>
    </ligand>
</feature>
<feature type="binding site" evidence="1">
    <location>
        <position position="345"/>
    </location>
    <ligand>
        <name>Mn(2+)</name>
        <dbReference type="ChEBI" id="CHEBI:29035"/>
        <label>1</label>
    </ligand>
</feature>
<feature type="binding site" evidence="1">
    <location>
        <position position="356"/>
    </location>
    <ligand>
        <name>Mn(2+)</name>
        <dbReference type="ChEBI" id="CHEBI:29035"/>
        <label>2</label>
    </ligand>
</feature>
<evidence type="ECO:0000255" key="1">
    <source>
        <dbReference type="HAMAP-Rule" id="MF_00740"/>
    </source>
</evidence>
<reference key="1">
    <citation type="submission" date="2007-03" db="EMBL/GenBank/DDBJ databases">
        <title>Complete sequence of Shewanella loihica PV-4.</title>
        <authorList>
            <consortium name="US DOE Joint Genome Institute"/>
            <person name="Copeland A."/>
            <person name="Lucas S."/>
            <person name="Lapidus A."/>
            <person name="Barry K."/>
            <person name="Detter J.C."/>
            <person name="Glavina del Rio T."/>
            <person name="Hammon N."/>
            <person name="Israni S."/>
            <person name="Dalin E."/>
            <person name="Tice H."/>
            <person name="Pitluck S."/>
            <person name="Chain P."/>
            <person name="Malfatti S."/>
            <person name="Shin M."/>
            <person name="Vergez L."/>
            <person name="Schmutz J."/>
            <person name="Larimer F."/>
            <person name="Land M."/>
            <person name="Hauser L."/>
            <person name="Kyrpides N."/>
            <person name="Mikhailova N."/>
            <person name="Romine M.F."/>
            <person name="Serres G."/>
            <person name="Fredrickson J."/>
            <person name="Tiedje J."/>
            <person name="Richardson P."/>
        </authorList>
    </citation>
    <scope>NUCLEOTIDE SEQUENCE [LARGE SCALE GENOMIC DNA]</scope>
    <source>
        <strain>ATCC BAA-1088 / PV-4</strain>
    </source>
</reference>
<proteinExistence type="inferred from homology"/>
<gene>
    <name evidence="1" type="primary">deoB</name>
    <name type="ordered locus">Shew_2813</name>
</gene>
<accession>A3QGT1</accession>